<name>HES5_HUMAN</name>
<dbReference type="EMBL" id="DQ272660">
    <property type="protein sequence ID" value="ABB83829.1"/>
    <property type="molecule type" value="mRNA"/>
</dbReference>
<dbReference type="EMBL" id="AL139246">
    <property type="status" value="NOT_ANNOTATED_CDS"/>
    <property type="molecule type" value="Genomic_DNA"/>
</dbReference>
<dbReference type="EMBL" id="CH471183">
    <property type="protein sequence ID" value="EAW56096.1"/>
    <property type="molecule type" value="Genomic_DNA"/>
</dbReference>
<dbReference type="CCDS" id="CCDS41233.1"/>
<dbReference type="RefSeq" id="NP_001010926.1">
    <property type="nucleotide sequence ID" value="NM_001010926.4"/>
</dbReference>
<dbReference type="SMR" id="Q5TA89"/>
<dbReference type="BioGRID" id="132759">
    <property type="interactions" value="4"/>
</dbReference>
<dbReference type="FunCoup" id="Q5TA89">
    <property type="interactions" value="297"/>
</dbReference>
<dbReference type="STRING" id="9606.ENSP00000367714"/>
<dbReference type="iPTMnet" id="Q5TA89"/>
<dbReference type="PhosphoSitePlus" id="Q5TA89"/>
<dbReference type="BioMuta" id="HES5"/>
<dbReference type="DMDM" id="74745795"/>
<dbReference type="jPOST" id="Q5TA89"/>
<dbReference type="MassIVE" id="Q5TA89"/>
<dbReference type="PaxDb" id="9606-ENSP00000367714"/>
<dbReference type="PeptideAtlas" id="Q5TA89"/>
<dbReference type="ProteomicsDB" id="64837"/>
<dbReference type="Antibodypedia" id="26785">
    <property type="antibodies" value="214 antibodies from 36 providers"/>
</dbReference>
<dbReference type="DNASU" id="388585"/>
<dbReference type="Ensembl" id="ENST00000378453.4">
    <property type="protein sequence ID" value="ENSP00000367714.3"/>
    <property type="gene ID" value="ENSG00000197921.6"/>
</dbReference>
<dbReference type="Ensembl" id="ENST00000612705.2">
    <property type="protein sequence ID" value="ENSP00000482150.1"/>
    <property type="gene ID" value="ENSG00000273529.2"/>
</dbReference>
<dbReference type="GeneID" id="388585"/>
<dbReference type="KEGG" id="hsa:388585"/>
<dbReference type="MANE-Select" id="ENST00000378453.4">
    <property type="protein sequence ID" value="ENSP00000367714.3"/>
    <property type="RefSeq nucleotide sequence ID" value="NM_001010926.4"/>
    <property type="RefSeq protein sequence ID" value="NP_001010926.1"/>
</dbReference>
<dbReference type="UCSC" id="uc001ajn.3">
    <property type="organism name" value="human"/>
</dbReference>
<dbReference type="AGR" id="HGNC:19764"/>
<dbReference type="CTD" id="388585"/>
<dbReference type="DisGeNET" id="388585"/>
<dbReference type="GeneCards" id="HES5"/>
<dbReference type="HGNC" id="HGNC:19764">
    <property type="gene designation" value="HES5"/>
</dbReference>
<dbReference type="HPA" id="ENSG00000197921">
    <property type="expression patterns" value="Tissue enhanced (brain, skin)"/>
</dbReference>
<dbReference type="MIM" id="607348">
    <property type="type" value="gene"/>
</dbReference>
<dbReference type="neXtProt" id="NX_Q5TA89"/>
<dbReference type="OpenTargets" id="ENSG00000197921"/>
<dbReference type="PharmGKB" id="PA134967985"/>
<dbReference type="VEuPathDB" id="HostDB:ENSG00000197921"/>
<dbReference type="eggNOG" id="ENOG502S6S1">
    <property type="taxonomic scope" value="Eukaryota"/>
</dbReference>
<dbReference type="GeneTree" id="ENSGT00940000162836"/>
<dbReference type="HOGENOM" id="CLU_068550_3_1_1"/>
<dbReference type="InParanoid" id="Q5TA89"/>
<dbReference type="OMA" id="MKLLCHF"/>
<dbReference type="OrthoDB" id="6085656at2759"/>
<dbReference type="PAN-GO" id="Q5TA89">
    <property type="GO annotations" value="6 GO annotations based on evolutionary models"/>
</dbReference>
<dbReference type="PhylomeDB" id="Q5TA89"/>
<dbReference type="TreeFam" id="TF351373"/>
<dbReference type="PathwayCommons" id="Q5TA89"/>
<dbReference type="Reactome" id="R-HSA-2122947">
    <property type="pathway name" value="NOTCH1 Intracellular Domain Regulates Transcription"/>
</dbReference>
<dbReference type="Reactome" id="R-HSA-2197563">
    <property type="pathway name" value="NOTCH2 intracellular domain regulates transcription"/>
</dbReference>
<dbReference type="Reactome" id="R-HSA-2644606">
    <property type="pathway name" value="Constitutive Signaling by NOTCH1 PEST Domain Mutants"/>
</dbReference>
<dbReference type="Reactome" id="R-HSA-2894862">
    <property type="pathway name" value="Constitutive Signaling by NOTCH1 HD+PEST Domain Mutants"/>
</dbReference>
<dbReference type="Reactome" id="R-HSA-9013508">
    <property type="pathway name" value="NOTCH3 Intracellular Domain Regulates Transcription"/>
</dbReference>
<dbReference type="Reactome" id="R-HSA-9013695">
    <property type="pathway name" value="NOTCH4 Intracellular Domain Regulates Transcription"/>
</dbReference>
<dbReference type="SignaLink" id="Q5TA89"/>
<dbReference type="SIGNOR" id="Q5TA89"/>
<dbReference type="BioGRID-ORCS" id="388585">
    <property type="hits" value="13 hits in 1165 CRISPR screens"/>
</dbReference>
<dbReference type="GeneWiki" id="HES5"/>
<dbReference type="GenomeRNAi" id="388585"/>
<dbReference type="Pharos" id="Q5TA89">
    <property type="development level" value="Tbio"/>
</dbReference>
<dbReference type="PRO" id="PR:Q5TA89"/>
<dbReference type="Proteomes" id="UP000005640">
    <property type="component" value="Chromosome 1"/>
</dbReference>
<dbReference type="RNAct" id="Q5TA89">
    <property type="molecule type" value="protein"/>
</dbReference>
<dbReference type="Bgee" id="ENSG00000197921">
    <property type="expression patterns" value="Expressed in primordial germ cell in gonad and 78 other cell types or tissues"/>
</dbReference>
<dbReference type="GO" id="GO:0000785">
    <property type="term" value="C:chromatin"/>
    <property type="evidence" value="ECO:0000247"/>
    <property type="project" value="NTNU_SB"/>
</dbReference>
<dbReference type="GO" id="GO:0005654">
    <property type="term" value="C:nucleoplasm"/>
    <property type="evidence" value="ECO:0000304"/>
    <property type="project" value="Reactome"/>
</dbReference>
<dbReference type="GO" id="GO:0005634">
    <property type="term" value="C:nucleus"/>
    <property type="evidence" value="ECO:0000318"/>
    <property type="project" value="GO_Central"/>
</dbReference>
<dbReference type="GO" id="GO:0000981">
    <property type="term" value="F:DNA-binding transcription factor activity, RNA polymerase II-specific"/>
    <property type="evidence" value="ECO:0000247"/>
    <property type="project" value="NTNU_SB"/>
</dbReference>
<dbReference type="GO" id="GO:0001227">
    <property type="term" value="F:DNA-binding transcription repressor activity, RNA polymerase II-specific"/>
    <property type="evidence" value="ECO:0000250"/>
    <property type="project" value="UniProtKB"/>
</dbReference>
<dbReference type="GO" id="GO:0046983">
    <property type="term" value="F:protein dimerization activity"/>
    <property type="evidence" value="ECO:0007669"/>
    <property type="project" value="InterPro"/>
</dbReference>
<dbReference type="GO" id="GO:0000978">
    <property type="term" value="F:RNA polymerase II cis-regulatory region sequence-specific DNA binding"/>
    <property type="evidence" value="ECO:0000318"/>
    <property type="project" value="GO_Central"/>
</dbReference>
<dbReference type="GO" id="GO:1990837">
    <property type="term" value="F:sequence-specific double-stranded DNA binding"/>
    <property type="evidence" value="ECO:0000314"/>
    <property type="project" value="ARUK-UCL"/>
</dbReference>
<dbReference type="GO" id="GO:0048708">
    <property type="term" value="P:astrocyte differentiation"/>
    <property type="evidence" value="ECO:0000250"/>
    <property type="project" value="UniProtKB"/>
</dbReference>
<dbReference type="GO" id="GO:0030509">
    <property type="term" value="P:BMP signaling pathway"/>
    <property type="evidence" value="ECO:0007669"/>
    <property type="project" value="Ensembl"/>
</dbReference>
<dbReference type="GO" id="GO:0007420">
    <property type="term" value="P:brain development"/>
    <property type="evidence" value="ECO:0000250"/>
    <property type="project" value="UniProtKB"/>
</dbReference>
<dbReference type="GO" id="GO:0043010">
    <property type="term" value="P:camera-type eye development"/>
    <property type="evidence" value="ECO:0000250"/>
    <property type="project" value="UniProtKB"/>
</dbReference>
<dbReference type="GO" id="GO:0051216">
    <property type="term" value="P:cartilage development"/>
    <property type="evidence" value="ECO:0000314"/>
    <property type="project" value="UniProtKB"/>
</dbReference>
<dbReference type="GO" id="GO:0007155">
    <property type="term" value="P:cell adhesion"/>
    <property type="evidence" value="ECO:0000250"/>
    <property type="project" value="UniProtKB"/>
</dbReference>
<dbReference type="GO" id="GO:0048469">
    <property type="term" value="P:cell maturation"/>
    <property type="evidence" value="ECO:0000250"/>
    <property type="project" value="UniProtKB"/>
</dbReference>
<dbReference type="GO" id="GO:0022010">
    <property type="term" value="P:central nervous system myelination"/>
    <property type="evidence" value="ECO:0000250"/>
    <property type="project" value="UniProtKB"/>
</dbReference>
<dbReference type="GO" id="GO:0021953">
    <property type="term" value="P:central nervous system neuron differentiation"/>
    <property type="evidence" value="ECO:0007669"/>
    <property type="project" value="Ensembl"/>
</dbReference>
<dbReference type="GO" id="GO:0072049">
    <property type="term" value="P:comma-shaped body morphogenesis"/>
    <property type="evidence" value="ECO:0007669"/>
    <property type="project" value="Ensembl"/>
</dbReference>
<dbReference type="GO" id="GO:0090162">
    <property type="term" value="P:establishment of epithelial cell polarity"/>
    <property type="evidence" value="ECO:0007669"/>
    <property type="project" value="Ensembl"/>
</dbReference>
<dbReference type="GO" id="GO:0021781">
    <property type="term" value="P:glial cell fate commitment"/>
    <property type="evidence" value="ECO:0000250"/>
    <property type="project" value="UniProtKB"/>
</dbReference>
<dbReference type="GO" id="GO:0042491">
    <property type="term" value="P:inner ear auditory receptor cell differentiation"/>
    <property type="evidence" value="ECO:0007669"/>
    <property type="project" value="Ensembl"/>
</dbReference>
<dbReference type="GO" id="GO:0060122">
    <property type="term" value="P:inner ear receptor cell stereocilium organization"/>
    <property type="evidence" value="ECO:0007669"/>
    <property type="project" value="Ensembl"/>
</dbReference>
<dbReference type="GO" id="GO:0072282">
    <property type="term" value="P:metanephric nephron tubule morphogenesis"/>
    <property type="evidence" value="ECO:0007669"/>
    <property type="project" value="Ensembl"/>
</dbReference>
<dbReference type="GO" id="GO:0048712">
    <property type="term" value="P:negative regulation of astrocyte differentiation"/>
    <property type="evidence" value="ECO:0000250"/>
    <property type="project" value="UniProtKB"/>
</dbReference>
<dbReference type="GO" id="GO:0045608">
    <property type="term" value="P:negative regulation of inner ear auditory receptor cell differentiation"/>
    <property type="evidence" value="ECO:0007669"/>
    <property type="project" value="Ensembl"/>
</dbReference>
<dbReference type="GO" id="GO:0045665">
    <property type="term" value="P:negative regulation of neuron differentiation"/>
    <property type="evidence" value="ECO:0000250"/>
    <property type="project" value="UniProtKB"/>
</dbReference>
<dbReference type="GO" id="GO:0048715">
    <property type="term" value="P:negative regulation of oligodendrocyte differentiation"/>
    <property type="evidence" value="ECO:0000250"/>
    <property type="project" value="UniProtKB"/>
</dbReference>
<dbReference type="GO" id="GO:2000974">
    <property type="term" value="P:negative regulation of pro-B cell differentiation"/>
    <property type="evidence" value="ECO:0000250"/>
    <property type="project" value="UniProtKB"/>
</dbReference>
<dbReference type="GO" id="GO:2000737">
    <property type="term" value="P:negative regulation of stem cell differentiation"/>
    <property type="evidence" value="ECO:0000315"/>
    <property type="project" value="UniProtKB"/>
</dbReference>
<dbReference type="GO" id="GO:0000122">
    <property type="term" value="P:negative regulation of transcription by RNA polymerase II"/>
    <property type="evidence" value="ECO:0000250"/>
    <property type="project" value="UniProtKB"/>
</dbReference>
<dbReference type="GO" id="GO:0021915">
    <property type="term" value="P:neural tube development"/>
    <property type="evidence" value="ECO:0000250"/>
    <property type="project" value="UniProtKB"/>
</dbReference>
<dbReference type="GO" id="GO:0097150">
    <property type="term" value="P:neuronal stem cell population maintenance"/>
    <property type="evidence" value="ECO:0000270"/>
    <property type="project" value="UniProtKB"/>
</dbReference>
<dbReference type="GO" id="GO:0007219">
    <property type="term" value="P:Notch signaling pathway"/>
    <property type="evidence" value="ECO:0000315"/>
    <property type="project" value="UniProtKB"/>
</dbReference>
<dbReference type="GO" id="GO:0014003">
    <property type="term" value="P:oligodendrocyte development"/>
    <property type="evidence" value="ECO:0000250"/>
    <property type="project" value="UniProtKB"/>
</dbReference>
<dbReference type="GO" id="GO:0030513">
    <property type="term" value="P:positive regulation of BMP signaling pathway"/>
    <property type="evidence" value="ECO:0000250"/>
    <property type="project" value="UniProtKB"/>
</dbReference>
<dbReference type="GO" id="GO:0008284">
    <property type="term" value="P:positive regulation of cell population proliferation"/>
    <property type="evidence" value="ECO:0000315"/>
    <property type="project" value="UniProtKB"/>
</dbReference>
<dbReference type="GO" id="GO:0045893">
    <property type="term" value="P:positive regulation of DNA-templated transcription"/>
    <property type="evidence" value="ECO:0000250"/>
    <property type="project" value="UniProtKB"/>
</dbReference>
<dbReference type="GO" id="GO:0045747">
    <property type="term" value="P:positive regulation of Notch signaling pathway"/>
    <property type="evidence" value="ECO:0007669"/>
    <property type="project" value="Ensembl"/>
</dbReference>
<dbReference type="GO" id="GO:0046427">
    <property type="term" value="P:positive regulation of receptor signaling pathway via JAK-STAT"/>
    <property type="evidence" value="ECO:0000250"/>
    <property type="project" value="UniProtKB"/>
</dbReference>
<dbReference type="GO" id="GO:0048661">
    <property type="term" value="P:positive regulation of smooth muscle cell proliferation"/>
    <property type="evidence" value="ECO:0000316"/>
    <property type="project" value="UniProtKB"/>
</dbReference>
<dbReference type="GO" id="GO:0045944">
    <property type="term" value="P:positive regulation of transcription by RNA polymerase II"/>
    <property type="evidence" value="ECO:0007669"/>
    <property type="project" value="Ensembl"/>
</dbReference>
<dbReference type="GO" id="GO:0065003">
    <property type="term" value="P:protein-containing complex assembly"/>
    <property type="evidence" value="ECO:0000250"/>
    <property type="project" value="UniProtKB"/>
</dbReference>
<dbReference type="GO" id="GO:0045595">
    <property type="term" value="P:regulation of cell differentiation"/>
    <property type="evidence" value="ECO:0000250"/>
    <property type="project" value="UniProtKB"/>
</dbReference>
<dbReference type="GO" id="GO:0050678">
    <property type="term" value="P:regulation of epithelial cell proliferation"/>
    <property type="evidence" value="ECO:0007669"/>
    <property type="project" value="Ensembl"/>
</dbReference>
<dbReference type="GO" id="GO:0031641">
    <property type="term" value="P:regulation of myelination"/>
    <property type="evidence" value="ECO:0000250"/>
    <property type="project" value="UniProtKB"/>
</dbReference>
<dbReference type="GO" id="GO:0050767">
    <property type="term" value="P:regulation of neurogenesis"/>
    <property type="evidence" value="ECO:0000250"/>
    <property type="project" value="UniProtKB"/>
</dbReference>
<dbReference type="GO" id="GO:0072050">
    <property type="term" value="P:S-shaped body morphogenesis"/>
    <property type="evidence" value="ECO:0007669"/>
    <property type="project" value="Ensembl"/>
</dbReference>
<dbReference type="GO" id="GO:0007224">
    <property type="term" value="P:smoothened signaling pathway"/>
    <property type="evidence" value="ECO:0000250"/>
    <property type="project" value="UniProtKB"/>
</dbReference>
<dbReference type="GO" id="GO:0072086">
    <property type="term" value="P:specification of loop of Henle identity"/>
    <property type="evidence" value="ECO:0007669"/>
    <property type="project" value="Ensembl"/>
</dbReference>
<dbReference type="GO" id="GO:0021537">
    <property type="term" value="P:telencephalon development"/>
    <property type="evidence" value="ECO:0000250"/>
    <property type="project" value="UniProtKB"/>
</dbReference>
<dbReference type="CDD" id="cd11461">
    <property type="entry name" value="bHLH-O_HES5"/>
    <property type="match status" value="1"/>
</dbReference>
<dbReference type="FunFam" id="4.10.280.10:FF:000033">
    <property type="entry name" value="Transcription factor HES-5"/>
    <property type="match status" value="1"/>
</dbReference>
<dbReference type="Gene3D" id="4.10.280.10">
    <property type="entry name" value="Helix-loop-helix DNA-binding domain"/>
    <property type="match status" value="1"/>
</dbReference>
<dbReference type="InterPro" id="IPR011598">
    <property type="entry name" value="bHLH_dom"/>
</dbReference>
<dbReference type="InterPro" id="IPR050370">
    <property type="entry name" value="HES_HEY"/>
</dbReference>
<dbReference type="InterPro" id="IPR036638">
    <property type="entry name" value="HLH_DNA-bd_sf"/>
</dbReference>
<dbReference type="InterPro" id="IPR003650">
    <property type="entry name" value="Orange_dom"/>
</dbReference>
<dbReference type="PANTHER" id="PTHR10985">
    <property type="entry name" value="BASIC HELIX-LOOP-HELIX TRANSCRIPTION FACTOR, HES-RELATED"/>
    <property type="match status" value="1"/>
</dbReference>
<dbReference type="Pfam" id="PF07527">
    <property type="entry name" value="Hairy_orange"/>
    <property type="match status" value="1"/>
</dbReference>
<dbReference type="Pfam" id="PF00010">
    <property type="entry name" value="HLH"/>
    <property type="match status" value="1"/>
</dbReference>
<dbReference type="SMART" id="SM00353">
    <property type="entry name" value="HLH"/>
    <property type="match status" value="1"/>
</dbReference>
<dbReference type="SMART" id="SM00511">
    <property type="entry name" value="ORANGE"/>
    <property type="match status" value="1"/>
</dbReference>
<dbReference type="SUPFAM" id="SSF47459">
    <property type="entry name" value="HLH, helix-loop-helix DNA-binding domain"/>
    <property type="match status" value="1"/>
</dbReference>
<dbReference type="PROSITE" id="PS50888">
    <property type="entry name" value="BHLH"/>
    <property type="match status" value="1"/>
</dbReference>
<dbReference type="PROSITE" id="PS51054">
    <property type="entry name" value="ORANGE"/>
    <property type="match status" value="1"/>
</dbReference>
<keyword id="KW-0217">Developmental protein</keyword>
<keyword id="KW-0221">Differentiation</keyword>
<keyword id="KW-0238">DNA-binding</keyword>
<keyword id="KW-0524">Neurogenesis</keyword>
<keyword id="KW-0539">Nucleus</keyword>
<keyword id="KW-1185">Reference proteome</keyword>
<keyword id="KW-0678">Repressor</keyword>
<keyword id="KW-0804">Transcription</keyword>
<keyword id="KW-0805">Transcription regulation</keyword>
<evidence type="ECO:0000250" key="1"/>
<evidence type="ECO:0000255" key="2">
    <source>
        <dbReference type="PROSITE-ProRule" id="PRU00380"/>
    </source>
</evidence>
<evidence type="ECO:0000255" key="3">
    <source>
        <dbReference type="PROSITE-ProRule" id="PRU00981"/>
    </source>
</evidence>
<evidence type="ECO:0000256" key="4">
    <source>
        <dbReference type="SAM" id="MobiDB-lite"/>
    </source>
</evidence>
<evidence type="ECO:0000269" key="5">
    <source>
    </source>
</evidence>
<feature type="chain" id="PRO_0000269175" description="Transcription factor HES-5">
    <location>
        <begin position="1"/>
        <end position="166"/>
    </location>
</feature>
<feature type="domain" description="bHLH" evidence="3">
    <location>
        <begin position="16"/>
        <end position="72"/>
    </location>
</feature>
<feature type="domain" description="Orange" evidence="2">
    <location>
        <begin position="88"/>
        <end position="119"/>
    </location>
</feature>
<feature type="region of interest" description="Disordered" evidence="4">
    <location>
        <begin position="125"/>
        <end position="144"/>
    </location>
</feature>
<feature type="short sequence motif" description="WRPW motif">
    <location>
        <begin position="163"/>
        <end position="166"/>
    </location>
</feature>
<protein>
    <recommendedName>
        <fullName>Transcription factor HES-5</fullName>
    </recommendedName>
    <alternativeName>
        <fullName>Class B basic helix-loop-helix protein 38</fullName>
        <shortName>bHLHb38</shortName>
    </alternativeName>
    <alternativeName>
        <fullName>Hairy and enhancer of split 5</fullName>
    </alternativeName>
</protein>
<reference key="1">
    <citation type="submission" date="2005-11" db="EMBL/GenBank/DDBJ databases">
        <authorList>
            <person name="Wistow G."/>
        </authorList>
    </citation>
    <scope>NUCLEOTIDE SEQUENCE [MRNA]</scope>
</reference>
<reference key="2">
    <citation type="journal article" date="2006" name="Nature">
        <title>The DNA sequence and biological annotation of human chromosome 1.</title>
        <authorList>
            <person name="Gregory S.G."/>
            <person name="Barlow K.F."/>
            <person name="McLay K.E."/>
            <person name="Kaul R."/>
            <person name="Swarbreck D."/>
            <person name="Dunham A."/>
            <person name="Scott C.E."/>
            <person name="Howe K.L."/>
            <person name="Woodfine K."/>
            <person name="Spencer C.C.A."/>
            <person name="Jones M.C."/>
            <person name="Gillson C."/>
            <person name="Searle S."/>
            <person name="Zhou Y."/>
            <person name="Kokocinski F."/>
            <person name="McDonald L."/>
            <person name="Evans R."/>
            <person name="Phillips K."/>
            <person name="Atkinson A."/>
            <person name="Cooper R."/>
            <person name="Jones C."/>
            <person name="Hall R.E."/>
            <person name="Andrews T.D."/>
            <person name="Lloyd C."/>
            <person name="Ainscough R."/>
            <person name="Almeida J.P."/>
            <person name="Ambrose K.D."/>
            <person name="Anderson F."/>
            <person name="Andrew R.W."/>
            <person name="Ashwell R.I.S."/>
            <person name="Aubin K."/>
            <person name="Babbage A.K."/>
            <person name="Bagguley C.L."/>
            <person name="Bailey J."/>
            <person name="Beasley H."/>
            <person name="Bethel G."/>
            <person name="Bird C.P."/>
            <person name="Bray-Allen S."/>
            <person name="Brown J.Y."/>
            <person name="Brown A.J."/>
            <person name="Buckley D."/>
            <person name="Burton J."/>
            <person name="Bye J."/>
            <person name="Carder C."/>
            <person name="Chapman J.C."/>
            <person name="Clark S.Y."/>
            <person name="Clarke G."/>
            <person name="Clee C."/>
            <person name="Cobley V."/>
            <person name="Collier R.E."/>
            <person name="Corby N."/>
            <person name="Coville G.J."/>
            <person name="Davies J."/>
            <person name="Deadman R."/>
            <person name="Dunn M."/>
            <person name="Earthrowl M."/>
            <person name="Ellington A.G."/>
            <person name="Errington H."/>
            <person name="Frankish A."/>
            <person name="Frankland J."/>
            <person name="French L."/>
            <person name="Garner P."/>
            <person name="Garnett J."/>
            <person name="Gay L."/>
            <person name="Ghori M.R.J."/>
            <person name="Gibson R."/>
            <person name="Gilby L.M."/>
            <person name="Gillett W."/>
            <person name="Glithero R.J."/>
            <person name="Grafham D.V."/>
            <person name="Griffiths C."/>
            <person name="Griffiths-Jones S."/>
            <person name="Grocock R."/>
            <person name="Hammond S."/>
            <person name="Harrison E.S.I."/>
            <person name="Hart E."/>
            <person name="Haugen E."/>
            <person name="Heath P.D."/>
            <person name="Holmes S."/>
            <person name="Holt K."/>
            <person name="Howden P.J."/>
            <person name="Hunt A.R."/>
            <person name="Hunt S.E."/>
            <person name="Hunter G."/>
            <person name="Isherwood J."/>
            <person name="James R."/>
            <person name="Johnson C."/>
            <person name="Johnson D."/>
            <person name="Joy A."/>
            <person name="Kay M."/>
            <person name="Kershaw J.K."/>
            <person name="Kibukawa M."/>
            <person name="Kimberley A.M."/>
            <person name="King A."/>
            <person name="Knights A.J."/>
            <person name="Lad H."/>
            <person name="Laird G."/>
            <person name="Lawlor S."/>
            <person name="Leongamornlert D.A."/>
            <person name="Lloyd D.M."/>
            <person name="Loveland J."/>
            <person name="Lovell J."/>
            <person name="Lush M.J."/>
            <person name="Lyne R."/>
            <person name="Martin S."/>
            <person name="Mashreghi-Mohammadi M."/>
            <person name="Matthews L."/>
            <person name="Matthews N.S.W."/>
            <person name="McLaren S."/>
            <person name="Milne S."/>
            <person name="Mistry S."/>
            <person name="Moore M.J.F."/>
            <person name="Nickerson T."/>
            <person name="O'Dell C.N."/>
            <person name="Oliver K."/>
            <person name="Palmeiri A."/>
            <person name="Palmer S.A."/>
            <person name="Parker A."/>
            <person name="Patel D."/>
            <person name="Pearce A.V."/>
            <person name="Peck A.I."/>
            <person name="Pelan S."/>
            <person name="Phelps K."/>
            <person name="Phillimore B.J."/>
            <person name="Plumb R."/>
            <person name="Rajan J."/>
            <person name="Raymond C."/>
            <person name="Rouse G."/>
            <person name="Saenphimmachak C."/>
            <person name="Sehra H.K."/>
            <person name="Sheridan E."/>
            <person name="Shownkeen R."/>
            <person name="Sims S."/>
            <person name="Skuce C.D."/>
            <person name="Smith M."/>
            <person name="Steward C."/>
            <person name="Subramanian S."/>
            <person name="Sycamore N."/>
            <person name="Tracey A."/>
            <person name="Tromans A."/>
            <person name="Van Helmond Z."/>
            <person name="Wall M."/>
            <person name="Wallis J.M."/>
            <person name="White S."/>
            <person name="Whitehead S.L."/>
            <person name="Wilkinson J.E."/>
            <person name="Willey D.L."/>
            <person name="Williams H."/>
            <person name="Wilming L."/>
            <person name="Wray P.W."/>
            <person name="Wu Z."/>
            <person name="Coulson A."/>
            <person name="Vaudin M."/>
            <person name="Sulston J.E."/>
            <person name="Durbin R.M."/>
            <person name="Hubbard T."/>
            <person name="Wooster R."/>
            <person name="Dunham I."/>
            <person name="Carter N.P."/>
            <person name="McVean G."/>
            <person name="Ross M.T."/>
            <person name="Harrow J."/>
            <person name="Olson M.V."/>
            <person name="Beck S."/>
            <person name="Rogers J."/>
            <person name="Bentley D.R."/>
        </authorList>
    </citation>
    <scope>NUCLEOTIDE SEQUENCE [LARGE SCALE GENOMIC DNA]</scope>
</reference>
<reference key="3">
    <citation type="submission" date="2005-07" db="EMBL/GenBank/DDBJ databases">
        <authorList>
            <person name="Mural R.J."/>
            <person name="Istrail S."/>
            <person name="Sutton G.G."/>
            <person name="Florea L."/>
            <person name="Halpern A.L."/>
            <person name="Mobarry C.M."/>
            <person name="Lippert R."/>
            <person name="Walenz B."/>
            <person name="Shatkay H."/>
            <person name="Dew I."/>
            <person name="Miller J.R."/>
            <person name="Flanigan M.J."/>
            <person name="Edwards N.J."/>
            <person name="Bolanos R."/>
            <person name="Fasulo D."/>
            <person name="Halldorsson B.V."/>
            <person name="Hannenhalli S."/>
            <person name="Turner R."/>
            <person name="Yooseph S."/>
            <person name="Lu F."/>
            <person name="Nusskern D.R."/>
            <person name="Shue B.C."/>
            <person name="Zheng X.H."/>
            <person name="Zhong F."/>
            <person name="Delcher A.L."/>
            <person name="Huson D.H."/>
            <person name="Kravitz S.A."/>
            <person name="Mouchard L."/>
            <person name="Reinert K."/>
            <person name="Remington K.A."/>
            <person name="Clark A.G."/>
            <person name="Waterman M.S."/>
            <person name="Eichler E.E."/>
            <person name="Adams M.D."/>
            <person name="Hunkapiller M.W."/>
            <person name="Myers E.W."/>
            <person name="Venter J.C."/>
        </authorList>
    </citation>
    <scope>NUCLEOTIDE SEQUENCE [LARGE SCALE GENOMIC DNA]</scope>
</reference>
<reference key="4">
    <citation type="journal article" date="2004" name="Int. J. Oncol.">
        <title>Identification and characterization of human HES2, HES3, and HES5 genes in silico.</title>
        <authorList>
            <person name="Katoh M."/>
            <person name="Katoh M."/>
        </authorList>
    </citation>
    <scope>IDENTIFICATION</scope>
    <scope>TISSUE SPECIFICITY</scope>
</reference>
<sequence length="166" mass="18226">MAPSTVAVELLSPKEKNRLRKPVVEKMRRDRINSSIEQLKLLLEQEFARHQPNSKLEKADILEMAVSYLKHSKAFVAAAGPKSLHQDYSEGYSWCLQEAVQFLTLHAASDTQMKLLYHFQRPPAAPAAPAKEPKAPGAAPPPALSAKATAAAAAAHQPACGLWRPW</sequence>
<organism>
    <name type="scientific">Homo sapiens</name>
    <name type="common">Human</name>
    <dbReference type="NCBI Taxonomy" id="9606"/>
    <lineage>
        <taxon>Eukaryota</taxon>
        <taxon>Metazoa</taxon>
        <taxon>Chordata</taxon>
        <taxon>Craniata</taxon>
        <taxon>Vertebrata</taxon>
        <taxon>Euteleostomi</taxon>
        <taxon>Mammalia</taxon>
        <taxon>Eutheria</taxon>
        <taxon>Euarchontoglires</taxon>
        <taxon>Primates</taxon>
        <taxon>Haplorrhini</taxon>
        <taxon>Catarrhini</taxon>
        <taxon>Hominidae</taxon>
        <taxon>Homo</taxon>
    </lineage>
</organism>
<proteinExistence type="evidence at transcript level"/>
<accession>Q5TA89</accession>
<accession>B9DI85</accession>
<comment type="function">
    <text evidence="1">Transcriptional repressor of genes that require a bHLH protein for their transcription. Plays an important role as neurogenesis negative regulator (By similarity).</text>
</comment>
<comment type="subunit">
    <text evidence="1">Transcription repression requires formation of a complex with a corepressor protein of the Groucho/TLE family.</text>
</comment>
<comment type="subcellular location">
    <subcellularLocation>
        <location evidence="2 3">Nucleus</location>
    </subcellularLocation>
</comment>
<comment type="tissue specificity">
    <text evidence="5">Expressed in fetal heart and brain tumors.</text>
</comment>
<comment type="domain">
    <text evidence="1">Has a particular type of basic domain (presence of a helix-interrupting proline) that binds to the N-box (CACNAG), rather than the canonical E-box (CANNTG).</text>
</comment>
<comment type="domain">
    <text evidence="1">The C-terminal WRPW motif is a transcriptional repression domain necessary for the interaction with Groucho/TLE family members, transcriptional corepressors recruited to specific target DNA by Hairy-related proteins.</text>
</comment>
<gene>
    <name type="primary">HES5</name>
    <name type="synonym">BHLHB38</name>
</gene>